<organism>
    <name type="scientific">Drosophila melanogaster</name>
    <name type="common">Fruit fly</name>
    <dbReference type="NCBI Taxonomy" id="7227"/>
    <lineage>
        <taxon>Eukaryota</taxon>
        <taxon>Metazoa</taxon>
        <taxon>Ecdysozoa</taxon>
        <taxon>Arthropoda</taxon>
        <taxon>Hexapoda</taxon>
        <taxon>Insecta</taxon>
        <taxon>Pterygota</taxon>
        <taxon>Neoptera</taxon>
        <taxon>Endopterygota</taxon>
        <taxon>Diptera</taxon>
        <taxon>Brachycera</taxon>
        <taxon>Muscomorpha</taxon>
        <taxon>Ephydroidea</taxon>
        <taxon>Drosophilidae</taxon>
        <taxon>Drosophila</taxon>
        <taxon>Sophophora</taxon>
    </lineage>
</organism>
<sequence length="1214" mass="136850">MGKKDKNKKGGQDSAAAPQPQQQQKQQQQRQQQPQQLQQPQQLQQPQQLQQPQQQQQQQPHQQQQQSSRQQPSTSSGGSRASGFQQGGQQQKSQDAEGWTAQKKQGKQQVQGWTKQGQQGGHQQGRQGQDGGYQQRPPGQQQGGHQQGRQGQEGGYQQRPPGQQQGGHQQGRQGQEGGYQQRPSGQQQGGHQQGRQGQEGGYQQRPPGQQQGGHQQGRQGQEGGYQQRPSGQQQGGHQQGRQGQEGGYQQRPPGQQQGGHQQGRQGQEGGYQQRPPGQQQGGHEQGRQGQEGGYQQRPSGQQQGGHQQGRQGQEGGYQQRPSGQQQGGHQQGRQGQEGGYQQRPSGQQQGGHQQGRQGQEGGYQQRPPGQQPNQTQSQGQYQSRGPPQQQQAAPLPLPPQPAGSIKRGTIGKPGQVGINYLDLDLSKMPSVAYHYDVKIMPERPKKFYRQAFEQFRVDQLGGAVLAYDGKASCYSVDKLPLNSQNPEVTVTDRNGRTLRYTIEIKETGDSTIDLKSLTTYMNDRIFDKPMRAMQCVEVVLASPCHNKAIRVGRSFFKMSDPNNRHELDDGYEALVGLYQAFMLGDRPFLNVDISHKSFPISMPMIEYLERFSLKAKINNTTNLDYSRRFLEPFLRGINVVYTPPQSFQSAPRVYRVNGLSRAPASSETFEHDGKKVTIASYFHSRNYPLKFPQLHCLNVGSSIKSILLPIELCSIEEGQALNRKDGATQVANMIKYAATSTNVRKRKIMNLLQYFQHNLDPTISRFGIRIANDFIVVSTRVLSPPQVEYHSKRFTMVKNGSWRMDGMKFLEPKPKAHKCAVLYCDPRSGRKMNYTQLNDFGNLIISQGKAVNISLDSDVTYRPFTDDERSLDTIFADLKRSQHDLAIVIIPQFRISYDTIKQKAELQHGILTQCIKQFTVERKCNNQTIGNILLKINSKLNGINHKIKDDPRLPMMKNTMYIGADVTHPSPDQREIPSVVGVAASHDPYGASYNMQYRLQRGALEEIEDMFSITLEHLRVYKEYRNAYPDHIIYYRDGVSDGQFPKIKNEELRCIKQACDKVGCKPKICCVIVVKRHHTRFFPSGDVTTSNKFNNVDPGTVVDRTIVHPNEMQFFMVSHQAIQGTAKPTRYNVIENTGNLDIDLLQQLTYNLCHMFPRCNRSVSYPAPAYLAHLVAARGRVYLTGTNRFLDLKKEYAKRTIVPEFMKKNPMYFV</sequence>
<comment type="function">
    <text evidence="7 8 10 15">Essential for RNA interference (RNAi); double-stranded RNA induces potent and specific gene silencing (PubMed:11498593, PubMed:12368261, PubMed:14508492, PubMed:32504809). RNAi is mediated by the RNA-induced silencing complex (RISC), a sequence-specific, multicomponent nuclease that destroys or silences messenger RNAs homologous to the silencing trigger (PubMed:11498593, PubMed:12368261, PubMed:14508492).</text>
</comment>
<comment type="cofactor">
    <cofactor evidence="1">
        <name>Mg(2+)</name>
        <dbReference type="ChEBI" id="CHEBI:18420"/>
    </cofactor>
    <cofactor evidence="1">
        <name>Mn(2+)</name>
        <dbReference type="ChEBI" id="CHEBI:29035"/>
    </cofactor>
</comment>
<comment type="subunit">
    <text evidence="7 8 10 14">Interacts with Fmr1, Dcr-1 and vig to form the RNA-induced silencing complex (RISC), a ribonucleoprotein (RNP) complex involved in translation regulation, other components of the complex are RpL5, RpL11 and Rm62 (PubMed:11498593, PubMed:12368261, PubMed:14508492). As part of the RISC complex, interacts with Tudor-SN (PubMed:14508492). Interacts with Taf11 (PubMed:26257286).</text>
</comment>
<comment type="subunit">
    <text evidence="13">(Microbial infection) Interacts with cricket paralysis virus protein 1A; this interaction may block the RISC activity.</text>
</comment>
<comment type="interaction">
    <interactant intactId="EBI-442476">
        <id>Q9VUQ5</id>
    </interactant>
    <interactant intactId="EBI-422631">
        <id>Q9NFU0</id>
        <label>Fmr1</label>
    </interactant>
    <organismsDiffer>false</organismsDiffer>
    <experiments>4</experiments>
</comment>
<comment type="interaction">
    <interactant intactId="EBI-442476">
        <id>Q9VUQ5</id>
    </interactant>
    <interactant intactId="EBI-15848754">
        <id>Q9IJX4</id>
        <label>ORF1</label>
    </interactant>
    <organismsDiffer>true</organismsDiffer>
    <experiments>3</experiments>
</comment>
<comment type="subcellular location">
    <subcellularLocation>
        <location evidence="14">Nucleus</location>
    </subcellularLocation>
    <subcellularLocation>
        <location evidence="12 14">Cytoplasm</location>
        <location evidence="12 14">Cytoplasmic ribonucleoprotein granule</location>
    </subcellularLocation>
</comment>
<comment type="alternative products">
    <event type="alternative splicing"/>
    <isoform>
        <id>Q9VUQ5-1</id>
        <name>B</name>
        <sequence type="displayed"/>
    </isoform>
    <isoform>
        <id>Q9VUQ5-2</id>
        <name>C</name>
        <sequence type="described" ref="VSP_050781"/>
    </isoform>
</comment>
<comment type="domain">
    <text>PAZ domain provides a major contribution for nucleic acid recognition. PAZ binds oligonucleotides of different lengths and has a strong preference for single-stranded nucleic acids (ssRNA or SSDNA) or RNA duplexes with single-stranded 3' overhangs. Can bind the characteristic two-base 3' overhangs of siRNAs, indicating that it may contribute to the specific and productive incorporation of siRNAs and miRNAs into the RNAi pathway.</text>
</comment>
<comment type="similarity">
    <text evidence="17">Belongs to the argonaute family. Ago subfamily.</text>
</comment>
<comment type="sequence caution" evidence="17">
    <conflict type="erroneous initiation">
        <sequence resource="EMBL-CDS" id="AAM11104"/>
    </conflict>
    <text>Truncated N-terminus.</text>
</comment>
<evidence type="ECO:0000250" key="1"/>
<evidence type="ECO:0000255" key="2"/>
<evidence type="ECO:0000255" key="3">
    <source>
        <dbReference type="PROSITE-ProRule" id="PRU00142"/>
    </source>
</evidence>
<evidence type="ECO:0000255" key="4">
    <source>
        <dbReference type="PROSITE-ProRule" id="PRU00150"/>
    </source>
</evidence>
<evidence type="ECO:0000256" key="5">
    <source>
        <dbReference type="SAM" id="MobiDB-lite"/>
    </source>
</evidence>
<evidence type="ECO:0000269" key="6">
    <source>
    </source>
</evidence>
<evidence type="ECO:0000269" key="7">
    <source>
    </source>
</evidence>
<evidence type="ECO:0000269" key="8">
    <source>
    </source>
</evidence>
<evidence type="ECO:0000269" key="9">
    <source>
    </source>
</evidence>
<evidence type="ECO:0000269" key="10">
    <source>
    </source>
</evidence>
<evidence type="ECO:0000269" key="11">
    <source>
    </source>
</evidence>
<evidence type="ECO:0000269" key="12">
    <source>
    </source>
</evidence>
<evidence type="ECO:0000269" key="13">
    <source>
    </source>
</evidence>
<evidence type="ECO:0000269" key="14">
    <source>
    </source>
</evidence>
<evidence type="ECO:0000269" key="15">
    <source>
    </source>
</evidence>
<evidence type="ECO:0000303" key="16">
    <source ref="3"/>
</evidence>
<evidence type="ECO:0000305" key="17"/>
<evidence type="ECO:0000312" key="18">
    <source>
        <dbReference type="EMBL" id="AAF49619.2"/>
    </source>
</evidence>
<evidence type="ECO:0000312" key="19">
    <source>
        <dbReference type="EMBL" id="AAF49620.2"/>
    </source>
</evidence>
<evidence type="ECO:0000312" key="20">
    <source>
        <dbReference type="EMBL" id="AAM11104.1"/>
    </source>
</evidence>
<evidence type="ECO:0000312" key="21">
    <source>
        <dbReference type="EMBL" id="AAO39550.1"/>
    </source>
</evidence>
<evidence type="ECO:0007829" key="22">
    <source>
        <dbReference type="PDB" id="1T2R"/>
    </source>
</evidence>
<evidence type="ECO:0007829" key="23">
    <source>
        <dbReference type="PDB" id="1VYN"/>
    </source>
</evidence>
<evidence type="ECO:0007829" key="24">
    <source>
        <dbReference type="PDB" id="3MJ0"/>
    </source>
</evidence>
<proteinExistence type="evidence at protein level"/>
<name>AGO2_DROME</name>
<dbReference type="EMBL" id="AE014296">
    <property type="protein sequence ID" value="AAF49619.2"/>
    <property type="molecule type" value="Genomic_DNA"/>
</dbReference>
<dbReference type="EMBL" id="AE014296">
    <property type="protein sequence ID" value="AAF49620.2"/>
    <property type="molecule type" value="Genomic_DNA"/>
</dbReference>
<dbReference type="EMBL" id="BT003546">
    <property type="protein sequence ID" value="AAO39550.1"/>
    <property type="molecule type" value="mRNA"/>
</dbReference>
<dbReference type="EMBL" id="BT099682">
    <property type="protein sequence ID" value="ACV44468.1"/>
    <property type="molecule type" value="mRNA"/>
</dbReference>
<dbReference type="EMBL" id="DQ228766">
    <property type="protein sequence ID" value="ABB54719.1"/>
    <property type="molecule type" value="Genomic_DNA"/>
</dbReference>
<dbReference type="EMBL" id="DQ228767">
    <property type="protein sequence ID" value="ABB54720.1"/>
    <property type="molecule type" value="Genomic_DNA"/>
</dbReference>
<dbReference type="EMBL" id="DQ228768">
    <property type="protein sequence ID" value="ABB54721.1"/>
    <property type="molecule type" value="Genomic_DNA"/>
</dbReference>
<dbReference type="EMBL" id="DQ228769">
    <property type="protein sequence ID" value="ABB54722.1"/>
    <property type="molecule type" value="Genomic_DNA"/>
</dbReference>
<dbReference type="EMBL" id="DQ228770">
    <property type="protein sequence ID" value="ABB54723.1"/>
    <property type="molecule type" value="Genomic_DNA"/>
</dbReference>
<dbReference type="EMBL" id="DQ228771">
    <property type="protein sequence ID" value="ABB54724.1"/>
    <property type="molecule type" value="Genomic_DNA"/>
</dbReference>
<dbReference type="EMBL" id="DQ228772">
    <property type="protein sequence ID" value="ABB54725.1"/>
    <property type="molecule type" value="Genomic_DNA"/>
</dbReference>
<dbReference type="EMBL" id="DQ228773">
    <property type="protein sequence ID" value="ABB54726.1"/>
    <property type="molecule type" value="Genomic_DNA"/>
</dbReference>
<dbReference type="EMBL" id="AY094751">
    <property type="protein sequence ID" value="AAM11104.1"/>
    <property type="status" value="ALT_INIT"/>
    <property type="molecule type" value="mRNA"/>
</dbReference>
<dbReference type="RefSeq" id="NP_648775.1">
    <molecule id="Q9VUQ5-1"/>
    <property type="nucleotide sequence ID" value="NM_140518.3"/>
</dbReference>
<dbReference type="RefSeq" id="NP_730054.1">
    <molecule id="Q9VUQ5-2"/>
    <property type="nucleotide sequence ID" value="NM_168626.3"/>
</dbReference>
<dbReference type="PDB" id="1R6Z">
    <property type="method" value="X-ray"/>
    <property type="resolution" value="2.80 A"/>
    <property type="chains" value="A/P/Z=589-726"/>
</dbReference>
<dbReference type="PDB" id="1T2R">
    <property type="method" value="NMR"/>
    <property type="chains" value="A=602-720"/>
</dbReference>
<dbReference type="PDB" id="1T2S">
    <property type="method" value="NMR"/>
    <property type="chains" value="A=602-720"/>
</dbReference>
<dbReference type="PDB" id="1VYN">
    <property type="method" value="NMR"/>
    <property type="chains" value="A=602-740"/>
</dbReference>
<dbReference type="PDB" id="3MJ0">
    <property type="method" value="X-ray"/>
    <property type="resolution" value="2.31 A"/>
    <property type="chains" value="A=601-723"/>
</dbReference>
<dbReference type="PDBsum" id="1R6Z"/>
<dbReference type="PDBsum" id="1T2R"/>
<dbReference type="PDBsum" id="1T2S"/>
<dbReference type="PDBsum" id="1VYN"/>
<dbReference type="PDBsum" id="3MJ0"/>
<dbReference type="BMRB" id="Q9VUQ5"/>
<dbReference type="SMR" id="Q9VUQ5"/>
<dbReference type="BioGRID" id="65002">
    <property type="interactions" value="73"/>
</dbReference>
<dbReference type="ComplexPortal" id="CPX-2730">
    <property type="entry name" value="siRNA RISC-loading complex, R2D2 variant"/>
</dbReference>
<dbReference type="ComplexPortal" id="CPX-2732">
    <property type="entry name" value="siRNA RISC-loading complex, loqs variant"/>
</dbReference>
<dbReference type="DIP" id="DIP-41570N"/>
<dbReference type="FunCoup" id="Q9VUQ5">
    <property type="interactions" value="35"/>
</dbReference>
<dbReference type="IntAct" id="Q9VUQ5">
    <property type="interactions" value="35"/>
</dbReference>
<dbReference type="MINT" id="Q9VUQ5"/>
<dbReference type="STRING" id="7227.FBpp0075313"/>
<dbReference type="PaxDb" id="7227-FBpp0075313"/>
<dbReference type="ABCD" id="Q9VUQ5">
    <property type="antibodies" value="1 sequenced antibody"/>
</dbReference>
<dbReference type="EnsemblMetazoa" id="FBtr0075559">
    <molecule id="Q9VUQ5-1"/>
    <property type="protein sequence ID" value="FBpp0075312"/>
    <property type="gene ID" value="FBgn0087035"/>
</dbReference>
<dbReference type="EnsemblMetazoa" id="FBtr0075560">
    <molecule id="Q9VUQ5-2"/>
    <property type="protein sequence ID" value="FBpp0075313"/>
    <property type="gene ID" value="FBgn0087035"/>
</dbReference>
<dbReference type="GeneID" id="39683"/>
<dbReference type="KEGG" id="dme:Dmel_CG7439"/>
<dbReference type="AGR" id="FB:FBgn0087035"/>
<dbReference type="CTD" id="27161"/>
<dbReference type="FlyBase" id="FBgn0087035">
    <property type="gene designation" value="AGO2"/>
</dbReference>
<dbReference type="VEuPathDB" id="VectorBase:FBgn0087035"/>
<dbReference type="eggNOG" id="KOG1041">
    <property type="taxonomic scope" value="Eukaryota"/>
</dbReference>
<dbReference type="HOGENOM" id="CLU_004544_7_1_1"/>
<dbReference type="InParanoid" id="Q9VUQ5"/>
<dbReference type="OMA" id="QGPQQTW"/>
<dbReference type="OrthoDB" id="10252740at2759"/>
<dbReference type="PhylomeDB" id="Q9VUQ5"/>
<dbReference type="Reactome" id="R-DME-203927">
    <property type="pathway name" value="MicroRNA (miRNA) biogenesis"/>
</dbReference>
<dbReference type="Reactome" id="R-DME-426486">
    <property type="pathway name" value="Small interfering RNA (siRNA) biogenesis"/>
</dbReference>
<dbReference type="Reactome" id="R-DME-426496">
    <property type="pathway name" value="Post-transcriptional silencing by small RNAs"/>
</dbReference>
<dbReference type="Reactome" id="R-DME-5578749">
    <property type="pathway name" value="Transcriptional regulation by small RNAs"/>
</dbReference>
<dbReference type="SignaLink" id="Q9VUQ5"/>
<dbReference type="BioGRID-ORCS" id="39683">
    <property type="hits" value="1 hit in 1 CRISPR screen"/>
</dbReference>
<dbReference type="EvolutionaryTrace" id="Q9VUQ5"/>
<dbReference type="GenomeRNAi" id="39683"/>
<dbReference type="PRO" id="PR:Q9VUQ5"/>
<dbReference type="Proteomes" id="UP000000803">
    <property type="component" value="Chromosome 3L"/>
</dbReference>
<dbReference type="Bgee" id="FBgn0087035">
    <property type="expression patterns" value="Expressed in eye disc (Drosophila) and 228 other cell types or tissues"/>
</dbReference>
<dbReference type="ExpressionAtlas" id="Q9VUQ5">
    <property type="expression patterns" value="baseline and differential"/>
</dbReference>
<dbReference type="GO" id="GO:0005737">
    <property type="term" value="C:cytoplasm"/>
    <property type="evidence" value="ECO:0000314"/>
    <property type="project" value="FlyBase"/>
</dbReference>
<dbReference type="GO" id="GO:0036464">
    <property type="term" value="C:cytoplasmic ribonucleoprotein granule"/>
    <property type="evidence" value="ECO:0000318"/>
    <property type="project" value="GO_Central"/>
</dbReference>
<dbReference type="GO" id="GO:0005829">
    <property type="term" value="C:cytosol"/>
    <property type="evidence" value="ECO:0007005"/>
    <property type="project" value="FlyBase"/>
</dbReference>
<dbReference type="GO" id="GO:0071598">
    <property type="term" value="C:neuronal ribonucleoprotein granule"/>
    <property type="evidence" value="ECO:0000314"/>
    <property type="project" value="UniProtKB"/>
</dbReference>
<dbReference type="GO" id="GO:0005634">
    <property type="term" value="C:nucleus"/>
    <property type="evidence" value="ECO:0000314"/>
    <property type="project" value="FlyBase"/>
</dbReference>
<dbReference type="GO" id="GO:0016442">
    <property type="term" value="C:RISC complex"/>
    <property type="evidence" value="ECO:0000314"/>
    <property type="project" value="UniProtKB"/>
</dbReference>
<dbReference type="GO" id="GO:0070578">
    <property type="term" value="C:RISC-loading complex"/>
    <property type="evidence" value="ECO:0000314"/>
    <property type="project" value="FlyBase"/>
</dbReference>
<dbReference type="GO" id="GO:0070551">
    <property type="term" value="F:endoribonuclease activity, cleaving siRNA-paired mRNA"/>
    <property type="evidence" value="ECO:0000314"/>
    <property type="project" value="FlyBase"/>
</dbReference>
<dbReference type="GO" id="GO:0046872">
    <property type="term" value="F:metal ion binding"/>
    <property type="evidence" value="ECO:0007669"/>
    <property type="project" value="UniProtKB-KW"/>
</dbReference>
<dbReference type="GO" id="GO:0035198">
    <property type="term" value="F:miRNA binding"/>
    <property type="evidence" value="ECO:0000318"/>
    <property type="project" value="GO_Central"/>
</dbReference>
<dbReference type="GO" id="GO:0004521">
    <property type="term" value="F:RNA endonuclease activity"/>
    <property type="evidence" value="ECO:0000314"/>
    <property type="project" value="FlyBase"/>
</dbReference>
<dbReference type="GO" id="GO:0016891">
    <property type="term" value="F:RNA endonuclease activity, producing 5'-phosphomonoesters"/>
    <property type="evidence" value="ECO:0000314"/>
    <property type="project" value="FlyBase"/>
</dbReference>
<dbReference type="GO" id="GO:0003727">
    <property type="term" value="F:single-stranded RNA binding"/>
    <property type="evidence" value="ECO:0000314"/>
    <property type="project" value="FlyBase"/>
</dbReference>
<dbReference type="GO" id="GO:0035197">
    <property type="term" value="F:siRNA binding"/>
    <property type="evidence" value="ECO:0000314"/>
    <property type="project" value="FlyBase"/>
</dbReference>
<dbReference type="GO" id="GO:0098586">
    <property type="term" value="P:cellular response to virus"/>
    <property type="evidence" value="ECO:0000315"/>
    <property type="project" value="FlyBase"/>
</dbReference>
<dbReference type="GO" id="GO:0007349">
    <property type="term" value="P:cellularization"/>
    <property type="evidence" value="ECO:0000315"/>
    <property type="project" value="FlyBase"/>
</dbReference>
<dbReference type="GO" id="GO:0051607">
    <property type="term" value="P:defense response to virus"/>
    <property type="evidence" value="ECO:0000315"/>
    <property type="project" value="FlyBase"/>
</dbReference>
<dbReference type="GO" id="GO:0009047">
    <property type="term" value="P:dosage compensation by hyperactivation of X chromosome"/>
    <property type="evidence" value="ECO:0000316"/>
    <property type="project" value="FlyBase"/>
</dbReference>
<dbReference type="GO" id="GO:0035195">
    <property type="term" value="P:miRNA-mediated post-transcriptional gene silencing"/>
    <property type="evidence" value="ECO:0000315"/>
    <property type="project" value="FlyBase"/>
</dbReference>
<dbReference type="GO" id="GO:0045071">
    <property type="term" value="P:negative regulation of viral genome replication"/>
    <property type="evidence" value="ECO:0000315"/>
    <property type="project" value="FlyBase"/>
</dbReference>
<dbReference type="GO" id="GO:0034587">
    <property type="term" value="P:piRNA processing"/>
    <property type="evidence" value="ECO:0000315"/>
    <property type="project" value="FlyBase"/>
</dbReference>
<dbReference type="GO" id="GO:0140991">
    <property type="term" value="P:piRNA-mediated gene silencing by mRNA destabilization"/>
    <property type="evidence" value="ECO:0000315"/>
    <property type="project" value="FlyBase"/>
</dbReference>
<dbReference type="GO" id="GO:0007279">
    <property type="term" value="P:pole cell formation"/>
    <property type="evidence" value="ECO:0000315"/>
    <property type="project" value="FlyBase"/>
</dbReference>
<dbReference type="GO" id="GO:0035194">
    <property type="term" value="P:regulatory ncRNA-mediated post-transcriptional gene silencing"/>
    <property type="evidence" value="ECO:0000314"/>
    <property type="project" value="FlyBase"/>
</dbReference>
<dbReference type="GO" id="GO:0070922">
    <property type="term" value="P:RISC complex assembly"/>
    <property type="evidence" value="ECO:0000314"/>
    <property type="project" value="FlyBase"/>
</dbReference>
<dbReference type="GO" id="GO:0009616">
    <property type="term" value="P:RNAi-mediated antiviral immune response"/>
    <property type="evidence" value="ECO:0000315"/>
    <property type="project" value="FlyBase"/>
</dbReference>
<dbReference type="GO" id="GO:0051214">
    <property type="term" value="P:RNAi-mediated antiviral immunity against RNA virus"/>
    <property type="evidence" value="ECO:0000315"/>
    <property type="project" value="FlyBase"/>
</dbReference>
<dbReference type="GO" id="GO:0007367">
    <property type="term" value="P:segment polarity determination"/>
    <property type="evidence" value="ECO:0000316"/>
    <property type="project" value="FlyBase"/>
</dbReference>
<dbReference type="GO" id="GO:0030422">
    <property type="term" value="P:siRNA processing"/>
    <property type="evidence" value="ECO:0000314"/>
    <property type="project" value="UniProtKB"/>
</dbReference>
<dbReference type="GO" id="GO:0090625">
    <property type="term" value="P:siRNA-mediated gene silencing by mRNA destabilization"/>
    <property type="evidence" value="ECO:0000314"/>
    <property type="project" value="FlyBase"/>
</dbReference>
<dbReference type="GO" id="GO:0141194">
    <property type="term" value="P:siRNA-mediated heterochromatin formation"/>
    <property type="evidence" value="ECO:0000316"/>
    <property type="project" value="FlyBase"/>
</dbReference>
<dbReference type="GO" id="GO:0140727">
    <property type="term" value="P:siRNA-mediated pericentric heterochromatin formation"/>
    <property type="evidence" value="ECO:0000315"/>
    <property type="project" value="FlyBase"/>
</dbReference>
<dbReference type="GO" id="GO:0035190">
    <property type="term" value="P:syncytial nuclear migration"/>
    <property type="evidence" value="ECO:0000315"/>
    <property type="project" value="FlyBase"/>
</dbReference>
<dbReference type="CDD" id="cd02825">
    <property type="entry name" value="PAZ"/>
    <property type="match status" value="1"/>
</dbReference>
<dbReference type="CDD" id="cd04657">
    <property type="entry name" value="Piwi_ago-like"/>
    <property type="match status" value="1"/>
</dbReference>
<dbReference type="Gene3D" id="3.40.50.2300">
    <property type="match status" value="1"/>
</dbReference>
<dbReference type="Gene3D" id="2.170.260.10">
    <property type="entry name" value="paz domain"/>
    <property type="match status" value="1"/>
</dbReference>
<dbReference type="Gene3D" id="3.30.420.10">
    <property type="entry name" value="Ribonuclease H-like superfamily/Ribonuclease H"/>
    <property type="match status" value="1"/>
</dbReference>
<dbReference type="InterPro" id="IPR014811">
    <property type="entry name" value="ArgoL1"/>
</dbReference>
<dbReference type="InterPro" id="IPR032472">
    <property type="entry name" value="ArgoL2"/>
</dbReference>
<dbReference type="InterPro" id="IPR032473">
    <property type="entry name" value="Argonaute_Mid_dom"/>
</dbReference>
<dbReference type="InterPro" id="IPR032474">
    <property type="entry name" value="Argonaute_N"/>
</dbReference>
<dbReference type="InterPro" id="IPR003100">
    <property type="entry name" value="PAZ_dom"/>
</dbReference>
<dbReference type="InterPro" id="IPR036085">
    <property type="entry name" value="PAZ_dom_sf"/>
</dbReference>
<dbReference type="InterPro" id="IPR003165">
    <property type="entry name" value="Piwi"/>
</dbReference>
<dbReference type="InterPro" id="IPR045246">
    <property type="entry name" value="Piwi_ago-like"/>
</dbReference>
<dbReference type="InterPro" id="IPR012337">
    <property type="entry name" value="RNaseH-like_sf"/>
</dbReference>
<dbReference type="InterPro" id="IPR036397">
    <property type="entry name" value="RNaseH_sf"/>
</dbReference>
<dbReference type="PANTHER" id="PTHR22891">
    <property type="entry name" value="EUKARYOTIC TRANSLATION INITIATION FACTOR 2C"/>
    <property type="match status" value="1"/>
</dbReference>
<dbReference type="Pfam" id="PF08699">
    <property type="entry name" value="ArgoL1"/>
    <property type="match status" value="1"/>
</dbReference>
<dbReference type="Pfam" id="PF16488">
    <property type="entry name" value="ArgoL2"/>
    <property type="match status" value="1"/>
</dbReference>
<dbReference type="Pfam" id="PF16487">
    <property type="entry name" value="ArgoMid"/>
    <property type="match status" value="1"/>
</dbReference>
<dbReference type="Pfam" id="PF16486">
    <property type="entry name" value="ArgoN"/>
    <property type="match status" value="1"/>
</dbReference>
<dbReference type="Pfam" id="PF02170">
    <property type="entry name" value="PAZ"/>
    <property type="match status" value="1"/>
</dbReference>
<dbReference type="Pfam" id="PF02171">
    <property type="entry name" value="Piwi"/>
    <property type="match status" value="1"/>
</dbReference>
<dbReference type="SMART" id="SM01163">
    <property type="entry name" value="DUF1785"/>
    <property type="match status" value="1"/>
</dbReference>
<dbReference type="SMART" id="SM00950">
    <property type="entry name" value="Piwi"/>
    <property type="match status" value="1"/>
</dbReference>
<dbReference type="SUPFAM" id="SSF101690">
    <property type="entry name" value="PAZ domain"/>
    <property type="match status" value="1"/>
</dbReference>
<dbReference type="SUPFAM" id="SSF53098">
    <property type="entry name" value="Ribonuclease H-like"/>
    <property type="match status" value="1"/>
</dbReference>
<dbReference type="PROSITE" id="PS50821">
    <property type="entry name" value="PAZ"/>
    <property type="match status" value="1"/>
</dbReference>
<dbReference type="PROSITE" id="PS50822">
    <property type="entry name" value="PIWI"/>
    <property type="match status" value="1"/>
</dbReference>
<keyword id="KW-0002">3D-structure</keyword>
<keyword id="KW-0025">Alternative splicing</keyword>
<keyword id="KW-0963">Cytoplasm</keyword>
<keyword id="KW-0903">Direct protein sequencing</keyword>
<keyword id="KW-0945">Host-virus interaction</keyword>
<keyword id="KW-0460">Magnesium</keyword>
<keyword id="KW-0464">Manganese</keyword>
<keyword id="KW-0479">Metal-binding</keyword>
<keyword id="KW-0539">Nucleus</keyword>
<keyword id="KW-1185">Reference proteome</keyword>
<keyword id="KW-0694">RNA-binding</keyword>
<keyword id="KW-0943">RNA-mediated gene silencing</keyword>
<accession>Q9VUQ5</accession>
<accession>C7LAD2</accession>
<accession>Q2Q3Y0</accession>
<accession>Q2Q3Y1</accession>
<accession>Q2Q3Y3</accession>
<accession>Q2Q3Y4</accession>
<accession>Q2Q3Y5</accession>
<accession>Q86P07</accession>
<accession>Q8T3N2</accession>
<accession>Q9VUQ6</accession>
<protein>
    <recommendedName>
        <fullName>Protein argonaute-2</fullName>
    </recommendedName>
</protein>
<reference evidence="19" key="1">
    <citation type="journal article" date="2000" name="Science">
        <title>The genome sequence of Drosophila melanogaster.</title>
        <authorList>
            <person name="Adams M.D."/>
            <person name="Celniker S.E."/>
            <person name="Holt R.A."/>
            <person name="Evans C.A."/>
            <person name="Gocayne J.D."/>
            <person name="Amanatides P.G."/>
            <person name="Scherer S.E."/>
            <person name="Li P.W."/>
            <person name="Hoskins R.A."/>
            <person name="Galle R.F."/>
            <person name="George R.A."/>
            <person name="Lewis S.E."/>
            <person name="Richards S."/>
            <person name="Ashburner M."/>
            <person name="Henderson S.N."/>
            <person name="Sutton G.G."/>
            <person name="Wortman J.R."/>
            <person name="Yandell M.D."/>
            <person name="Zhang Q."/>
            <person name="Chen L.X."/>
            <person name="Brandon R.C."/>
            <person name="Rogers Y.-H.C."/>
            <person name="Blazej R.G."/>
            <person name="Champe M."/>
            <person name="Pfeiffer B.D."/>
            <person name="Wan K.H."/>
            <person name="Doyle C."/>
            <person name="Baxter E.G."/>
            <person name="Helt G."/>
            <person name="Nelson C.R."/>
            <person name="Miklos G.L.G."/>
            <person name="Abril J.F."/>
            <person name="Agbayani A."/>
            <person name="An H.-J."/>
            <person name="Andrews-Pfannkoch C."/>
            <person name="Baldwin D."/>
            <person name="Ballew R.M."/>
            <person name="Basu A."/>
            <person name="Baxendale J."/>
            <person name="Bayraktaroglu L."/>
            <person name="Beasley E.M."/>
            <person name="Beeson K.Y."/>
            <person name="Benos P.V."/>
            <person name="Berman B.P."/>
            <person name="Bhandari D."/>
            <person name="Bolshakov S."/>
            <person name="Borkova D."/>
            <person name="Botchan M.R."/>
            <person name="Bouck J."/>
            <person name="Brokstein P."/>
            <person name="Brottier P."/>
            <person name="Burtis K.C."/>
            <person name="Busam D.A."/>
            <person name="Butler H."/>
            <person name="Cadieu E."/>
            <person name="Center A."/>
            <person name="Chandra I."/>
            <person name="Cherry J.M."/>
            <person name="Cawley S."/>
            <person name="Dahlke C."/>
            <person name="Davenport L.B."/>
            <person name="Davies P."/>
            <person name="de Pablos B."/>
            <person name="Delcher A."/>
            <person name="Deng Z."/>
            <person name="Mays A.D."/>
            <person name="Dew I."/>
            <person name="Dietz S.M."/>
            <person name="Dodson K."/>
            <person name="Doup L.E."/>
            <person name="Downes M."/>
            <person name="Dugan-Rocha S."/>
            <person name="Dunkov B.C."/>
            <person name="Dunn P."/>
            <person name="Durbin K.J."/>
            <person name="Evangelista C.C."/>
            <person name="Ferraz C."/>
            <person name="Ferriera S."/>
            <person name="Fleischmann W."/>
            <person name="Fosler C."/>
            <person name="Gabrielian A.E."/>
            <person name="Garg N.S."/>
            <person name="Gelbart W.M."/>
            <person name="Glasser K."/>
            <person name="Glodek A."/>
            <person name="Gong F."/>
            <person name="Gorrell J.H."/>
            <person name="Gu Z."/>
            <person name="Guan P."/>
            <person name="Harris M."/>
            <person name="Harris N.L."/>
            <person name="Harvey D.A."/>
            <person name="Heiman T.J."/>
            <person name="Hernandez J.R."/>
            <person name="Houck J."/>
            <person name="Hostin D."/>
            <person name="Houston K.A."/>
            <person name="Howland T.J."/>
            <person name="Wei M.-H."/>
            <person name="Ibegwam C."/>
            <person name="Jalali M."/>
            <person name="Kalush F."/>
            <person name="Karpen G.H."/>
            <person name="Ke Z."/>
            <person name="Kennison J.A."/>
            <person name="Ketchum K.A."/>
            <person name="Kimmel B.E."/>
            <person name="Kodira C.D."/>
            <person name="Kraft C.L."/>
            <person name="Kravitz S."/>
            <person name="Kulp D."/>
            <person name="Lai Z."/>
            <person name="Lasko P."/>
            <person name="Lei Y."/>
            <person name="Levitsky A.A."/>
            <person name="Li J.H."/>
            <person name="Li Z."/>
            <person name="Liang Y."/>
            <person name="Lin X."/>
            <person name="Liu X."/>
            <person name="Mattei B."/>
            <person name="McIntosh T.C."/>
            <person name="McLeod M.P."/>
            <person name="McPherson D."/>
            <person name="Merkulov G."/>
            <person name="Milshina N.V."/>
            <person name="Mobarry C."/>
            <person name="Morris J."/>
            <person name="Moshrefi A."/>
            <person name="Mount S.M."/>
            <person name="Moy M."/>
            <person name="Murphy B."/>
            <person name="Murphy L."/>
            <person name="Muzny D.M."/>
            <person name="Nelson D.L."/>
            <person name="Nelson D.R."/>
            <person name="Nelson K.A."/>
            <person name="Nixon K."/>
            <person name="Nusskern D.R."/>
            <person name="Pacleb J.M."/>
            <person name="Palazzolo M."/>
            <person name="Pittman G.S."/>
            <person name="Pan S."/>
            <person name="Pollard J."/>
            <person name="Puri V."/>
            <person name="Reese M.G."/>
            <person name="Reinert K."/>
            <person name="Remington K."/>
            <person name="Saunders R.D.C."/>
            <person name="Scheeler F."/>
            <person name="Shen H."/>
            <person name="Shue B.C."/>
            <person name="Siden-Kiamos I."/>
            <person name="Simpson M."/>
            <person name="Skupski M.P."/>
            <person name="Smith T.J."/>
            <person name="Spier E."/>
            <person name="Spradling A.C."/>
            <person name="Stapleton M."/>
            <person name="Strong R."/>
            <person name="Sun E."/>
            <person name="Svirskas R."/>
            <person name="Tector C."/>
            <person name="Turner R."/>
            <person name="Venter E."/>
            <person name="Wang A.H."/>
            <person name="Wang X."/>
            <person name="Wang Z.-Y."/>
            <person name="Wassarman D.A."/>
            <person name="Weinstock G.M."/>
            <person name="Weissenbach J."/>
            <person name="Williams S.M."/>
            <person name="Woodage T."/>
            <person name="Worley K.C."/>
            <person name="Wu D."/>
            <person name="Yang S."/>
            <person name="Yao Q.A."/>
            <person name="Ye J."/>
            <person name="Yeh R.-F."/>
            <person name="Zaveri J.S."/>
            <person name="Zhan M."/>
            <person name="Zhang G."/>
            <person name="Zhao Q."/>
            <person name="Zheng L."/>
            <person name="Zheng X.H."/>
            <person name="Zhong F.N."/>
            <person name="Zhong W."/>
            <person name="Zhou X."/>
            <person name="Zhu S.C."/>
            <person name="Zhu X."/>
            <person name="Smith H.O."/>
            <person name="Gibbs R.A."/>
            <person name="Myers E.W."/>
            <person name="Rubin G.M."/>
            <person name="Venter J.C."/>
        </authorList>
    </citation>
    <scope>NUCLEOTIDE SEQUENCE [LARGE SCALE GENOMIC DNA]</scope>
    <source>
        <strain evidence="6">Berkeley</strain>
    </source>
</reference>
<reference evidence="17 18" key="2">
    <citation type="journal article" date="2002" name="Genome Biol.">
        <title>Annotation of the Drosophila melanogaster euchromatic genome: a systematic review.</title>
        <authorList>
            <person name="Misra S."/>
            <person name="Crosby M.A."/>
            <person name="Mungall C.J."/>
            <person name="Matthews B.B."/>
            <person name="Campbell K.S."/>
            <person name="Hradecky P."/>
            <person name="Huang Y."/>
            <person name="Kaminker J.S."/>
            <person name="Millburn G.H."/>
            <person name="Prochnik S.E."/>
            <person name="Smith C.D."/>
            <person name="Tupy J.L."/>
            <person name="Whitfield E.J."/>
            <person name="Bayraktaroglu L."/>
            <person name="Berman B.P."/>
            <person name="Bettencourt B.R."/>
            <person name="Celniker S.E."/>
            <person name="de Grey A.D.N.J."/>
            <person name="Drysdale R.A."/>
            <person name="Harris N.L."/>
            <person name="Richter J."/>
            <person name="Russo S."/>
            <person name="Schroeder A.J."/>
            <person name="Shu S.Q."/>
            <person name="Stapleton M."/>
            <person name="Yamada C."/>
            <person name="Ashburner M."/>
            <person name="Gelbart W.M."/>
            <person name="Rubin G.M."/>
            <person name="Lewis S.E."/>
        </authorList>
    </citation>
    <scope>GENOME REANNOTATION</scope>
    <scope>ALTERNATIVE SPLICING</scope>
    <source>
        <strain>Berkeley</strain>
    </source>
</reference>
<reference evidence="17 21" key="3">
    <citation type="submission" date="2009-09" db="EMBL/GenBank/DDBJ databases">
        <authorList>
            <person name="Stapleton M."/>
            <person name="Brokstein P."/>
            <person name="Hong L."/>
            <person name="Agbayani A."/>
            <person name="Booth B."/>
            <person name="Carlson J.W."/>
            <person name="Champe M."/>
            <person name="Chavez C."/>
            <person name="Dorsett V."/>
            <person name="Dresnek D."/>
            <person name="Farfan D."/>
            <person name="Frise E."/>
            <person name="George R.A."/>
            <person name="Gonzalez M."/>
            <person name="Guarin H."/>
            <person name="Kronmiller B."/>
            <person name="Li P.W."/>
            <person name="Liao G."/>
            <person name="Miranda A."/>
            <person name="Mungall C.J."/>
            <person name="Nunoo J."/>
            <person name="Pacleb J.M."/>
            <person name="Paragas V."/>
            <person name="Park S."/>
            <person name="Patel S."/>
            <person name="Phouanenavong S."/>
            <person name="Wan K.H."/>
            <person name="Yu C."/>
            <person name="Lewis S.E."/>
            <person name="Rubin G.M."/>
            <person name="Celniker S.E."/>
        </authorList>
    </citation>
    <scope>NUCLEOTIDE SEQUENCE [LARGE SCALE MRNA] (ISOFORMS B AND C)</scope>
    <source>
        <strain evidence="21">Berkeley</strain>
        <tissue>Embryo</tissue>
    </source>
</reference>
<reference key="4">
    <citation type="journal article" date="2006" name="Curr. Biol.">
        <title>Natural selection drives extremely rapid evolution in antiviral RNAi genes.</title>
        <authorList>
            <person name="Obbard D.J."/>
            <person name="Jiggins F.M."/>
            <person name="Halligan D.L."/>
            <person name="Little T.J."/>
        </authorList>
    </citation>
    <scope>NUCLEOTIDE SEQUENCE [GENOMIC DNA] OF 376-1214</scope>
    <scope>VARIANTS ARG-714; PRO-740; ASN-783; ALA-835; THR-854 AND GLU-866</scope>
    <source>
        <strain>128</strain>
        <strain>130</strain>
        <strain>138</strain>
        <strain>140</strain>
        <strain>141</strain>
        <strain>186</strain>
        <strain>187</strain>
        <strain>196</strain>
    </source>
</reference>
<reference evidence="17 20" key="5">
    <citation type="journal article" date="2002" name="Genome Biol.">
        <title>A Drosophila full-length cDNA resource.</title>
        <authorList>
            <person name="Stapleton M."/>
            <person name="Carlson J.W."/>
            <person name="Brokstein P."/>
            <person name="Yu C."/>
            <person name="Champe M."/>
            <person name="George R.A."/>
            <person name="Guarin H."/>
            <person name="Kronmiller B."/>
            <person name="Pacleb J.M."/>
            <person name="Park S."/>
            <person name="Wan K.H."/>
            <person name="Rubin G.M."/>
            <person name="Celniker S.E."/>
        </authorList>
    </citation>
    <scope>NUCLEOTIDE SEQUENCE [LARGE SCALE MRNA] OF 449-1214</scope>
    <scope>VARIANTS ASN-783; ALA-835 AND THR-854</scope>
    <source>
        <strain evidence="9">Berkeley</strain>
        <tissue evidence="9">Ovary</tissue>
    </source>
</reference>
<reference evidence="17" key="6">
    <citation type="journal article" date="2001" name="Science">
        <title>Argonaute2, a link between genetic and biochemical analyses of RNAi.</title>
        <authorList>
            <person name="Hammond S.M."/>
            <person name="Boettcher S."/>
            <person name="Caudy A.A."/>
            <person name="Kobayashi R."/>
            <person name="Hannon G.J."/>
        </authorList>
    </citation>
    <scope>PROTEIN SEQUENCE OF 506-515; 525-531; 554-557; 617-627; 662-674; 809-815 AND 1181-1188 (ISOFORM B)</scope>
    <scope>FUNCTION</scope>
    <scope>INTERACTION WITH DCR-1</scope>
</reference>
<reference key="7">
    <citation type="journal article" date="2003" name="Nature">
        <title>A micrococcal nuclease homologue in RNAi effector complexes.</title>
        <authorList>
            <person name="Caudy A.A."/>
            <person name="Ketting R.F."/>
            <person name="Hammond S.M."/>
            <person name="Denli A.M."/>
            <person name="Bathoorn A.M."/>
            <person name="Tops B.B."/>
            <person name="Silva J.M."/>
            <person name="Myers M.M."/>
            <person name="Hannon G.J."/>
            <person name="Plasterk R.H."/>
        </authorList>
    </citation>
    <scope>FUNCTION</scope>
    <scope>INTERACTION WITH VIG; FMR1 AND TUDOR-SN</scope>
</reference>
<reference evidence="17" key="8">
    <citation type="journal article" date="2002" name="Genes Dev.">
        <title>A Drosophila fragile X protein interacts with components of RNAi and ribosomal proteins.</title>
        <authorList>
            <person name="Ishizuka A."/>
            <person name="Siomi M.C."/>
            <person name="Siomi H."/>
        </authorList>
    </citation>
    <scope>FUNCTION</scope>
    <scope>INTERACTION WITH FMR1</scope>
</reference>
<reference key="9">
    <citation type="journal article" date="2006" name="Neuron">
        <title>Staufen- and FMRP-containing neuronal RNPs are structurally and functionally related to somatic P bodies.</title>
        <authorList>
            <person name="Barbee S.A."/>
            <person name="Estes P.S."/>
            <person name="Cziko A.M."/>
            <person name="Hillebrand J."/>
            <person name="Luedeman R.A."/>
            <person name="Coller J.M."/>
            <person name="Johnson N."/>
            <person name="Howlett I.C."/>
            <person name="Geng C."/>
            <person name="Ueda R."/>
            <person name="Brand A.H."/>
            <person name="Newbury S.F."/>
            <person name="Wilhelm J.E."/>
            <person name="Levine R.B."/>
            <person name="Nakamura A."/>
            <person name="Parker R."/>
            <person name="Ramaswami M."/>
        </authorList>
    </citation>
    <scope>SUBCELLULAR LOCATION</scope>
</reference>
<reference key="10">
    <citation type="journal article" date="2010" name="Nat. Struct. Mol. Biol.">
        <title>Cricket paralysis virus antagonizes Argonaute 2 to modulate antiviral defense in Drosophila.</title>
        <authorList>
            <person name="Nayak A."/>
            <person name="Berry B."/>
            <person name="Tassetto M."/>
            <person name="Kunitomi M."/>
            <person name="Acevedo A."/>
            <person name="Deng C."/>
            <person name="Krutchinsky A."/>
            <person name="Gross J."/>
            <person name="Antoniewski C."/>
            <person name="Andino R."/>
        </authorList>
    </citation>
    <scope>INTERACTION WITH CRICKET PARALYSIS VIRUS PROTEIN 1A (MICROBIAL INFECTION)</scope>
</reference>
<reference key="11">
    <citation type="journal article" date="2015" name="Mol. Cell">
        <title>TAF11 Assembles the RISC Loading Complex to Enhance RNAi Efficiency.</title>
        <authorList>
            <person name="Liang C."/>
            <person name="Wang Y."/>
            <person name="Murota Y."/>
            <person name="Liu X."/>
            <person name="Smith D."/>
            <person name="Siomi M.C."/>
            <person name="Liu Q."/>
        </authorList>
    </citation>
    <scope>INTERACTION WITH TAF11</scope>
    <scope>SUBCELLULAR LOCATION</scope>
</reference>
<reference key="12">
    <citation type="journal article" date="2020" name="Insect Biochem. Mol. Biol.">
        <title>Roles for Drosophila cap1 2'-O-ribose methyltransferase in the small RNA silencing pathway associated with Argonaute 2.</title>
        <authorList>
            <person name="Lee S."/>
            <person name="Hong J.S."/>
            <person name="Lim D.H."/>
            <person name="Lee Y.S."/>
        </authorList>
    </citation>
    <scope>FUNCTION</scope>
    <scope>MUTAGENESIS OF VAL-966</scope>
</reference>
<reference key="13">
    <citation type="journal article" date="2003" name="Nat. Struct. Biol.">
        <title>The crystal structure of the Argonaute2 PAZ domain reveals an RNA binding motif in RNAi effector complexes.</title>
        <authorList>
            <person name="Song J.J."/>
            <person name="Liu J."/>
            <person name="Tolia N.H."/>
            <person name="Schneiderman J."/>
            <person name="Smith S.K."/>
            <person name="Martienssen R.A."/>
            <person name="Hannon G.J."/>
            <person name="Joshua-Tor L."/>
        </authorList>
    </citation>
    <scope>X-RAY CRYSTALLOGRAPHY (2.8 ANGSTROMS) OF 591-726</scope>
</reference>
<reference key="14">
    <citation type="journal article" date="2003" name="Nature">
        <title>Structure and nucleic-acid binding of the Drosophila Argonaute 2 PAZ domain.</title>
        <authorList>
            <person name="Lingel A."/>
            <person name="Simon B."/>
            <person name="Izaurralde E."/>
            <person name="Sattler M."/>
        </authorList>
    </citation>
    <scope>STRUCTURE BY NMR OF 602-740</scope>
</reference>
<reference key="15">
    <citation type="journal article" date="2004" name="Nat. Struct. Mol. Biol.">
        <title>Nucleic acid 3'-end recognition by the Argonaute2 PAZ domain.</title>
        <authorList>
            <person name="Lingel A."/>
            <person name="Simon B."/>
            <person name="Izaurralde E."/>
            <person name="Sattler M."/>
        </authorList>
    </citation>
    <scope>STRUCTURE BY NMR OF 605-720</scope>
</reference>
<feature type="chain" id="PRO_0000194071" description="Protein argonaute-2">
    <location>
        <begin position="1"/>
        <end position="1214"/>
    </location>
</feature>
<feature type="domain" description="PAZ" evidence="3">
    <location>
        <begin position="608"/>
        <end position="717"/>
    </location>
</feature>
<feature type="domain" description="Piwi" evidence="4">
    <location>
        <begin position="885"/>
        <end position="1186"/>
    </location>
</feature>
<feature type="region of interest" description="Disordered" evidence="5">
    <location>
        <begin position="1"/>
        <end position="412"/>
    </location>
</feature>
<feature type="region of interest" description="Interaction with guide RNA" evidence="2">
    <location>
        <begin position="681"/>
        <end position="686"/>
    </location>
</feature>
<feature type="region of interest" description="Interaction with guide RNA" evidence="2">
    <location>
        <begin position="1075"/>
        <end position="1076"/>
    </location>
</feature>
<feature type="region of interest" description="Interaction with guide RNA" evidence="2">
    <location>
        <begin position="1119"/>
        <end position="1127"/>
    </location>
</feature>
<feature type="region of interest" description="Interaction with guide RNA" evidence="2">
    <location>
        <begin position="1156"/>
        <end position="1178"/>
    </location>
</feature>
<feature type="compositionally biased region" description="Low complexity" evidence="5">
    <location>
        <begin position="18"/>
        <end position="93"/>
    </location>
</feature>
<feature type="compositionally biased region" description="Low complexity" evidence="5">
    <location>
        <begin position="107"/>
        <end position="117"/>
    </location>
</feature>
<feature type="compositionally biased region" description="Gly residues" evidence="5">
    <location>
        <begin position="118"/>
        <end position="131"/>
    </location>
</feature>
<feature type="compositionally biased region" description="Gly residues" evidence="5">
    <location>
        <begin position="141"/>
        <end position="154"/>
    </location>
</feature>
<feature type="compositionally biased region" description="Gly residues" evidence="5">
    <location>
        <begin position="164"/>
        <end position="177"/>
    </location>
</feature>
<feature type="compositionally biased region" description="Gly residues" evidence="5">
    <location>
        <begin position="187"/>
        <end position="200"/>
    </location>
</feature>
<feature type="compositionally biased region" description="Gly residues" evidence="5">
    <location>
        <begin position="210"/>
        <end position="223"/>
    </location>
</feature>
<feature type="compositionally biased region" description="Gly residues" evidence="5">
    <location>
        <begin position="233"/>
        <end position="246"/>
    </location>
</feature>
<feature type="compositionally biased region" description="Gly residues" evidence="5">
    <location>
        <begin position="256"/>
        <end position="269"/>
    </location>
</feature>
<feature type="compositionally biased region" description="Low complexity" evidence="5">
    <location>
        <begin position="270"/>
        <end position="282"/>
    </location>
</feature>
<feature type="compositionally biased region" description="Gly residues" evidence="5">
    <location>
        <begin position="302"/>
        <end position="315"/>
    </location>
</feature>
<feature type="compositionally biased region" description="Gly residues" evidence="5">
    <location>
        <begin position="325"/>
        <end position="338"/>
    </location>
</feature>
<feature type="compositionally biased region" description="Gly residues" evidence="5">
    <location>
        <begin position="348"/>
        <end position="361"/>
    </location>
</feature>
<feature type="compositionally biased region" description="Low complexity" evidence="5">
    <location>
        <begin position="362"/>
        <end position="394"/>
    </location>
</feature>
<feature type="binding site" evidence="1">
    <location>
        <position position="965"/>
    </location>
    <ligand>
        <name>a divalent metal cation</name>
        <dbReference type="ChEBI" id="CHEBI:60240"/>
    </ligand>
</feature>
<feature type="binding site" evidence="1">
    <location>
        <position position="1037"/>
    </location>
    <ligand>
        <name>a divalent metal cation</name>
        <dbReference type="ChEBI" id="CHEBI:60240"/>
    </ligand>
</feature>
<feature type="binding site" evidence="1">
    <location>
        <position position="1173"/>
    </location>
    <ligand>
        <name>a divalent metal cation</name>
        <dbReference type="ChEBI" id="CHEBI:60240"/>
    </ligand>
</feature>
<feature type="splice variant" id="VSP_050781" description="In isoform C." evidence="16">
    <original>MGKKDK</original>
    <variation>MHFPITTPE</variation>
    <location>
        <begin position="1"/>
        <end position="6"/>
    </location>
</feature>
<feature type="sequence variant" description="In strain: 186." evidence="11">
    <original>S</original>
    <variation>R</variation>
    <location>
        <position position="714"/>
    </location>
</feature>
<feature type="sequence variant" description="In strain: 130." evidence="11">
    <original>S</original>
    <variation>P</variation>
    <location>
        <position position="740"/>
    </location>
</feature>
<feature type="sequence variant" description="In strain: 138, 140 and 196." evidence="9 11">
    <original>S</original>
    <variation>N</variation>
    <location>
        <position position="783"/>
    </location>
</feature>
<feature type="sequence variant" description="In strain: 128, 130, 138, 140, 141, 186, 187 and 196." evidence="9 11">
    <original>T</original>
    <variation>A</variation>
    <location>
        <position position="835"/>
    </location>
</feature>
<feature type="sequence variant" description="In strain: 128, 130, 138, 140, 141, 186, 187 and 196." evidence="9 11">
    <original>S</original>
    <variation>T</variation>
    <location>
        <position position="854"/>
    </location>
</feature>
<feature type="sequence variant" description="In strain: 128, 130, 141, 186 and 187." evidence="11">
    <original>D</original>
    <variation>E</variation>
    <location>
        <position position="866"/>
    </location>
</feature>
<feature type="mutagenesis site" description="Impaired conversion of the pre-RISC complex, containing duplex siRNA, to the holo-RISC complex, containing single-stranded guide siRNA." evidence="15">
    <original>V</original>
    <variation>M</variation>
    <location>
        <position position="966"/>
    </location>
</feature>
<feature type="sequence conflict" description="In Ref. 3; AAO39550." evidence="17" ref="3">
    <original>G</original>
    <variation>D</variation>
    <location>
        <position position="201"/>
    </location>
</feature>
<feature type="strand" evidence="24">
    <location>
        <begin position="601"/>
        <end position="603"/>
    </location>
</feature>
<feature type="helix" evidence="24">
    <location>
        <begin position="604"/>
        <end position="611"/>
    </location>
</feature>
<feature type="strand" evidence="23">
    <location>
        <begin position="618"/>
        <end position="621"/>
    </location>
</feature>
<feature type="helix" evidence="24">
    <location>
        <begin position="623"/>
        <end position="625"/>
    </location>
</feature>
<feature type="helix" evidence="24">
    <location>
        <begin position="627"/>
        <end position="634"/>
    </location>
</feature>
<feature type="strand" evidence="24">
    <location>
        <begin position="638"/>
        <end position="641"/>
    </location>
</feature>
<feature type="helix" evidence="24">
    <location>
        <begin position="645"/>
        <end position="647"/>
    </location>
</feature>
<feature type="strand" evidence="24">
    <location>
        <begin position="652"/>
        <end position="655"/>
    </location>
</feature>
<feature type="strand" evidence="24">
    <location>
        <begin position="658"/>
        <end position="663"/>
    </location>
</feature>
<feature type="turn" evidence="24">
    <location>
        <begin position="664"/>
        <end position="666"/>
    </location>
</feature>
<feature type="strand" evidence="24">
    <location>
        <begin position="668"/>
        <end position="677"/>
    </location>
</feature>
<feature type="helix" evidence="24">
    <location>
        <begin position="678"/>
        <end position="683"/>
    </location>
</feature>
<feature type="turn" evidence="24">
    <location>
        <begin position="684"/>
        <end position="686"/>
    </location>
</feature>
<feature type="strand" evidence="24">
    <location>
        <begin position="692"/>
        <end position="698"/>
    </location>
</feature>
<feature type="strand" evidence="22">
    <location>
        <begin position="705"/>
        <end position="708"/>
    </location>
</feature>
<feature type="helix" evidence="24">
    <location>
        <begin position="710"/>
        <end position="712"/>
    </location>
</feature>
<feature type="strand" evidence="24">
    <location>
        <begin position="713"/>
        <end position="716"/>
    </location>
</feature>
<feature type="turn" evidence="22">
    <location>
        <begin position="717"/>
        <end position="719"/>
    </location>
</feature>
<gene>
    <name evidence="19" type="primary">AGO2</name>
    <name type="ORF">CG7439</name>
</gene>